<organism>
    <name type="scientific">Cucumis sativus</name>
    <name type="common">Cucumber</name>
    <dbReference type="NCBI Taxonomy" id="3659"/>
    <lineage>
        <taxon>Eukaryota</taxon>
        <taxon>Viridiplantae</taxon>
        <taxon>Streptophyta</taxon>
        <taxon>Embryophyta</taxon>
        <taxon>Tracheophyta</taxon>
        <taxon>Spermatophyta</taxon>
        <taxon>Magnoliopsida</taxon>
        <taxon>eudicotyledons</taxon>
        <taxon>Gunneridae</taxon>
        <taxon>Pentapetalae</taxon>
        <taxon>rosids</taxon>
        <taxon>fabids</taxon>
        <taxon>Cucurbitales</taxon>
        <taxon>Cucurbitaceae</taxon>
        <taxon>Benincaseae</taxon>
        <taxon>Cucumis</taxon>
    </lineage>
</organism>
<name>MDHG_CUCSA</name>
<protein>
    <recommendedName>
        <fullName>Malate dehydrogenase, glyoxysomal</fullName>
        <ecNumber>1.1.1.37</ecNumber>
    </recommendedName>
</protein>
<feature type="transit peptide" description="Glyoxysome" evidence="2">
    <location>
        <begin position="1"/>
        <end position="36"/>
    </location>
</feature>
<feature type="chain" id="PRO_0000018639" description="Malate dehydrogenase, glyoxysomal">
    <location>
        <begin position="37"/>
        <end position="356"/>
    </location>
</feature>
<feature type="active site" description="Proton acceptor" evidence="1">
    <location>
        <position position="220"/>
    </location>
</feature>
<feature type="binding site" evidence="1">
    <location>
        <begin position="51"/>
        <end position="57"/>
    </location>
    <ligand>
        <name>NAD(+)</name>
        <dbReference type="ChEBI" id="CHEBI:57540"/>
    </ligand>
</feature>
<feature type="binding site" evidence="1">
    <location>
        <position position="77"/>
    </location>
    <ligand>
        <name>NAD(+)</name>
        <dbReference type="ChEBI" id="CHEBI:57540"/>
    </ligand>
</feature>
<feature type="binding site" evidence="3">
    <location>
        <position position="124"/>
    </location>
    <ligand>
        <name>substrate</name>
    </ligand>
</feature>
<feature type="binding site" evidence="3">
    <location>
        <position position="130"/>
    </location>
    <ligand>
        <name>substrate</name>
    </ligand>
</feature>
<feature type="binding site" evidence="1">
    <location>
        <position position="137"/>
    </location>
    <ligand>
        <name>NAD(+)</name>
        <dbReference type="ChEBI" id="CHEBI:57540"/>
    </ligand>
</feature>
<feature type="binding site" evidence="1">
    <location>
        <begin position="160"/>
        <end position="162"/>
    </location>
    <ligand>
        <name>NAD(+)</name>
        <dbReference type="ChEBI" id="CHEBI:57540"/>
    </ligand>
</feature>
<feature type="binding site" evidence="3">
    <location>
        <position position="162"/>
    </location>
    <ligand>
        <name>substrate</name>
    </ligand>
</feature>
<feature type="binding site" evidence="3">
    <location>
        <position position="196"/>
    </location>
    <ligand>
        <name>substrate</name>
    </ligand>
</feature>
<feature type="binding site" evidence="1">
    <location>
        <position position="271"/>
    </location>
    <ligand>
        <name>NAD(+)</name>
        <dbReference type="ChEBI" id="CHEBI:57540"/>
    </ligand>
</feature>
<sequence length="356" mass="37739">MQPIPDVNQRIARISAHLHPPKYQMEESSVLRRANCRAKGGAPGFKVAILGAAGGIGQPLAMLMKMNPLVSVLHLYDVVNAPGVTADISHMDTGAVVRGFLGQQQLERALTGMDLVVIPAGVPRKPGMTRDDLFKINAGIVKTLCEGIAKCCPTAIVNLISNPVNSTVPIAAEVFKKAGTYDPKRLLGVTMLDVVRANTFVAEVLGLDPRDVNVPVVGGHAGVTILPLLSQVKPPSSFTQEEINYLTDRIQNGGTEVVEAKAGAGSATLSMAYAAVKFADACLRGLRGDAGVVECAFVSSQVTELPFFATKVRLGRNGIDEVYSLGPLNEYERIGLEKAKKELAGSIEKGVSFIRG</sequence>
<reference key="1">
    <citation type="journal article" date="1994" name="Plant Mol. Biol.">
        <title>Expression of a single gene encoding microbody NAD-malate dehydrogenase during glyoxysome and peroxisome development in cucumber.</title>
        <authorList>
            <person name="Kim D.J."/>
            <person name="Smith S.M."/>
        </authorList>
    </citation>
    <scope>NUCLEOTIDE SEQUENCE [MRNA]</scope>
    <source>
        <strain>cv. Masterpiece</strain>
        <tissue>Cotyledon</tissue>
    </source>
</reference>
<gene>
    <name type="primary">MDHG</name>
</gene>
<accession>P46488</accession>
<proteinExistence type="evidence at transcript level"/>
<comment type="catalytic activity">
    <reaction evidence="3">
        <text>(S)-malate + NAD(+) = oxaloacetate + NADH + H(+)</text>
        <dbReference type="Rhea" id="RHEA:21432"/>
        <dbReference type="ChEBI" id="CHEBI:15378"/>
        <dbReference type="ChEBI" id="CHEBI:15589"/>
        <dbReference type="ChEBI" id="CHEBI:16452"/>
        <dbReference type="ChEBI" id="CHEBI:57540"/>
        <dbReference type="ChEBI" id="CHEBI:57945"/>
        <dbReference type="EC" id="1.1.1.37"/>
    </reaction>
</comment>
<comment type="subunit">
    <text evidence="1">Homodimer.</text>
</comment>
<comment type="subcellular location">
    <subcellularLocation>
        <location>Glyoxysome</location>
    </subcellularLocation>
</comment>
<comment type="similarity">
    <text evidence="4">Belongs to the LDH/MDH superfamily. MDH type 1 family.</text>
</comment>
<keyword id="KW-0329">Glyoxylate bypass</keyword>
<keyword id="KW-0330">Glyoxysome</keyword>
<keyword id="KW-0520">NAD</keyword>
<keyword id="KW-0560">Oxidoreductase</keyword>
<keyword id="KW-0576">Peroxisome</keyword>
<keyword id="KW-0809">Transit peptide</keyword>
<keyword id="KW-0816">Tricarboxylic acid cycle</keyword>
<dbReference type="EC" id="1.1.1.37"/>
<dbReference type="EMBL" id="L31900">
    <property type="protein sequence ID" value="AAC41647.1"/>
    <property type="molecule type" value="mRNA"/>
</dbReference>
<dbReference type="PIR" id="S52039">
    <property type="entry name" value="S52039"/>
</dbReference>
<dbReference type="RefSeq" id="NP_001292692.1">
    <property type="nucleotide sequence ID" value="NM_001305763.1"/>
</dbReference>
<dbReference type="SMR" id="P46488"/>
<dbReference type="GeneID" id="101219252"/>
<dbReference type="KEGG" id="csv:101219252"/>
<dbReference type="eggNOG" id="KOG1494">
    <property type="taxonomic scope" value="Eukaryota"/>
</dbReference>
<dbReference type="OrthoDB" id="4069699at2759"/>
<dbReference type="GO" id="GO:0009514">
    <property type="term" value="C:glyoxysome"/>
    <property type="evidence" value="ECO:0007669"/>
    <property type="project" value="UniProtKB-SubCell"/>
</dbReference>
<dbReference type="GO" id="GO:0030060">
    <property type="term" value="F:L-malate dehydrogenase (NAD+) activity"/>
    <property type="evidence" value="ECO:0007669"/>
    <property type="project" value="UniProtKB-EC"/>
</dbReference>
<dbReference type="GO" id="GO:0006097">
    <property type="term" value="P:glyoxylate cycle"/>
    <property type="evidence" value="ECO:0007669"/>
    <property type="project" value="UniProtKB-KW"/>
</dbReference>
<dbReference type="GO" id="GO:0006108">
    <property type="term" value="P:malate metabolic process"/>
    <property type="evidence" value="ECO:0007669"/>
    <property type="project" value="InterPro"/>
</dbReference>
<dbReference type="GO" id="GO:0006099">
    <property type="term" value="P:tricarboxylic acid cycle"/>
    <property type="evidence" value="ECO:0007669"/>
    <property type="project" value="UniProtKB-KW"/>
</dbReference>
<dbReference type="CDD" id="cd01337">
    <property type="entry name" value="MDH_glyoxysomal_mitochondrial"/>
    <property type="match status" value="1"/>
</dbReference>
<dbReference type="FunFam" id="3.40.50.720:FF:000013">
    <property type="entry name" value="Malate dehydrogenase"/>
    <property type="match status" value="1"/>
</dbReference>
<dbReference type="FunFam" id="3.90.110.10:FF:000001">
    <property type="entry name" value="Malate dehydrogenase"/>
    <property type="match status" value="1"/>
</dbReference>
<dbReference type="Gene3D" id="3.90.110.10">
    <property type="entry name" value="Lactate dehydrogenase/glycoside hydrolase, family 4, C-terminal"/>
    <property type="match status" value="1"/>
</dbReference>
<dbReference type="Gene3D" id="3.40.50.720">
    <property type="entry name" value="NAD(P)-binding Rossmann-like Domain"/>
    <property type="match status" value="1"/>
</dbReference>
<dbReference type="InterPro" id="IPR001557">
    <property type="entry name" value="L-lactate/malate_DH"/>
</dbReference>
<dbReference type="InterPro" id="IPR022383">
    <property type="entry name" value="Lactate/malate_DH_C"/>
</dbReference>
<dbReference type="InterPro" id="IPR001236">
    <property type="entry name" value="Lactate/malate_DH_N"/>
</dbReference>
<dbReference type="InterPro" id="IPR015955">
    <property type="entry name" value="Lactate_DH/Glyco_Ohase_4_C"/>
</dbReference>
<dbReference type="InterPro" id="IPR001252">
    <property type="entry name" value="Malate_DH_AS"/>
</dbReference>
<dbReference type="InterPro" id="IPR010097">
    <property type="entry name" value="Malate_DH_type1"/>
</dbReference>
<dbReference type="InterPro" id="IPR036291">
    <property type="entry name" value="NAD(P)-bd_dom_sf"/>
</dbReference>
<dbReference type="NCBIfam" id="TIGR01772">
    <property type="entry name" value="MDH_euk_gproteo"/>
    <property type="match status" value="1"/>
</dbReference>
<dbReference type="PANTHER" id="PTHR11540">
    <property type="entry name" value="MALATE AND LACTATE DEHYDROGENASE"/>
    <property type="match status" value="1"/>
</dbReference>
<dbReference type="PANTHER" id="PTHR11540:SF71">
    <property type="entry name" value="MALATE DEHYDROGENASE 1, PEROXISOMAL"/>
    <property type="match status" value="1"/>
</dbReference>
<dbReference type="Pfam" id="PF02866">
    <property type="entry name" value="Ldh_1_C"/>
    <property type="match status" value="1"/>
</dbReference>
<dbReference type="Pfam" id="PF00056">
    <property type="entry name" value="Ldh_1_N"/>
    <property type="match status" value="1"/>
</dbReference>
<dbReference type="PIRSF" id="PIRSF000102">
    <property type="entry name" value="Lac_mal_DH"/>
    <property type="match status" value="1"/>
</dbReference>
<dbReference type="SUPFAM" id="SSF56327">
    <property type="entry name" value="LDH C-terminal domain-like"/>
    <property type="match status" value="1"/>
</dbReference>
<dbReference type="SUPFAM" id="SSF51735">
    <property type="entry name" value="NAD(P)-binding Rossmann-fold domains"/>
    <property type="match status" value="1"/>
</dbReference>
<dbReference type="PROSITE" id="PS00068">
    <property type="entry name" value="MDH"/>
    <property type="match status" value="1"/>
</dbReference>
<evidence type="ECO:0000250" key="1"/>
<evidence type="ECO:0000255" key="2"/>
<evidence type="ECO:0000255" key="3">
    <source>
        <dbReference type="PROSITE-ProRule" id="PRU10004"/>
    </source>
</evidence>
<evidence type="ECO:0000305" key="4"/>